<comment type="function">
    <text>Probably involved in maintaining Golgi structure.</text>
</comment>
<comment type="interaction">
    <interactant intactId="EBI-746252">
        <id>Q96CN9</id>
    </interactant>
    <interactant intactId="EBI-743598">
        <id>Q9NYB9</id>
        <label>ABI2</label>
    </interactant>
    <organismsDiffer>false</organismsDiffer>
    <experiments>4</experiments>
</comment>
<comment type="interaction">
    <interactant intactId="EBI-746252">
        <id>Q96CN9</id>
    </interactant>
    <interactant intactId="EBI-492498">
        <id>P18848</id>
        <label>ATF4</label>
    </interactant>
    <organismsDiffer>false</organismsDiffer>
    <experiments>6</experiments>
</comment>
<comment type="interaction">
    <interactant intactId="EBI-746252">
        <id>Q96CN9</id>
    </interactant>
    <interactant intactId="EBI-514538">
        <id>Q13490</id>
        <label>BIRC2</label>
    </interactant>
    <organismsDiffer>false</organismsDiffer>
    <experiments>6</experiments>
</comment>
<comment type="interaction">
    <interactant intactId="EBI-746252">
        <id>Q96CN9</id>
    </interactant>
    <interactant intactId="EBI-946029">
        <id>Q6P1W5</id>
        <label>C1orf94</label>
    </interactant>
    <organismsDiffer>false</organismsDiffer>
    <experiments>3</experiments>
</comment>
<comment type="interaction">
    <interactant intactId="EBI-746252">
        <id>Q96CN9</id>
    </interactant>
    <interactant intactId="EBI-308614">
        <id>Q86XR8</id>
        <label>CEP57</label>
    </interactant>
    <organismsDiffer>false</organismsDiffer>
    <experiments>5</experiments>
</comment>
<comment type="interaction">
    <interactant intactId="EBI-746252">
        <id>Q96CN9</id>
    </interactant>
    <interactant intactId="EBI-11752486">
        <id>Q86XR8-3</id>
        <label>CEP57</label>
    </interactant>
    <organismsDiffer>false</organismsDiffer>
    <experiments>3</experiments>
</comment>
<comment type="interaction">
    <interactant intactId="EBI-746252">
        <id>Q96CN9</id>
    </interactant>
    <interactant intactId="EBI-739624">
        <id>Q8NHQ1</id>
        <label>CEP70</label>
    </interactant>
    <organismsDiffer>false</organismsDiffer>
    <experiments>6</experiments>
</comment>
<comment type="interaction">
    <interactant intactId="EBI-746252">
        <id>Q96CN9</id>
    </interactant>
    <interactant intactId="EBI-11988027">
        <id>Q9NRI5-2</id>
        <label>DISC1</label>
    </interactant>
    <organismsDiffer>false</organismsDiffer>
    <experiments>3</experiments>
</comment>
<comment type="interaction">
    <interactant intactId="EBI-746252">
        <id>Q96CN9</id>
    </interactant>
    <interactant intactId="EBI-3952284">
        <id>Q96EY1-2</id>
        <label>DNAJA3</label>
    </interactant>
    <organismsDiffer>false</organismsDiffer>
    <experiments>3</experiments>
</comment>
<comment type="interaction">
    <interactant intactId="EBI-746252">
        <id>Q96CN9</id>
    </interactant>
    <interactant intactId="EBI-1384254">
        <id>Q86UY5</id>
        <label>FAM83A</label>
    </interactant>
    <organismsDiffer>false</organismsDiffer>
    <experiments>3</experiments>
</comment>
<comment type="interaction">
    <interactant intactId="EBI-746252">
        <id>Q96CN9</id>
    </interactant>
    <interactant intactId="EBI-740282">
        <id>Q9NVF7</id>
        <label>FBXO28</label>
    </interactant>
    <organismsDiffer>false</organismsDiffer>
    <experiments>3</experiments>
</comment>
<comment type="interaction">
    <interactant intactId="EBI-746252">
        <id>Q96CN9</id>
    </interactant>
    <interactant intactId="EBI-8468390">
        <id>Q6PIW4</id>
        <label>FIGNL1</label>
    </interactant>
    <organismsDiffer>false</organismsDiffer>
    <experiments>3</experiments>
</comment>
<comment type="interaction">
    <interactant intactId="EBI-746252">
        <id>Q96CN9</id>
    </interactant>
    <interactant intactId="EBI-744510">
        <id>P15407</id>
        <label>FOSL1</label>
    </interactant>
    <organismsDiffer>false</organismsDiffer>
    <experiments>3</experiments>
</comment>
<comment type="interaction">
    <interactant intactId="EBI-746252">
        <id>Q96CN9</id>
    </interactant>
    <interactant intactId="EBI-1052570">
        <id>O95995</id>
        <label>GAS8</label>
    </interactant>
    <organismsDiffer>false</organismsDiffer>
    <experiments>3</experiments>
</comment>
<comment type="interaction">
    <interactant intactId="EBI-746252">
        <id>Q96CN9</id>
    </interactant>
    <interactant intactId="EBI-308084">
        <id>P08151</id>
        <label>GLI1</label>
    </interactant>
    <organismsDiffer>false</organismsDiffer>
    <experiments>3</experiments>
</comment>
<comment type="interaction">
    <interactant intactId="EBI-746252">
        <id>Q96CN9</id>
    </interactant>
    <interactant intactId="EBI-618309">
        <id>Q08379</id>
        <label>GOLGA2</label>
    </interactant>
    <organismsDiffer>false</organismsDiffer>
    <experiments>6</experiments>
</comment>
<comment type="interaction">
    <interactant intactId="EBI-746252">
        <id>Q96CN9</id>
    </interactant>
    <interactant intactId="EBI-1052734">
        <id>Q7Z353</id>
        <label>HDX</label>
    </interactant>
    <organismsDiffer>false</organismsDiffer>
    <experiments>3</experiments>
</comment>
<comment type="interaction">
    <interactant intactId="EBI-746252">
        <id>Q96CN9</id>
    </interactant>
    <interactant intactId="EBI-12141931">
        <id>Q8NDH6-2</id>
        <label>ICA1L</label>
    </interactant>
    <organismsDiffer>false</organismsDiffer>
    <experiments>3</experiments>
</comment>
<comment type="interaction">
    <interactant intactId="EBI-746252">
        <id>Q96CN9</id>
    </interactant>
    <interactant intactId="EBI-743591">
        <id>Q9BW62</id>
        <label>KATNAL1</label>
    </interactant>
    <organismsDiffer>false</organismsDiffer>
    <experiments>3</experiments>
</comment>
<comment type="interaction">
    <interactant intactId="EBI-746252">
        <id>Q96CN9</id>
    </interactant>
    <interactant intactId="EBI-710124">
        <id>O60341</id>
        <label>KDM1A</label>
    </interactant>
    <organismsDiffer>false</organismsDiffer>
    <experiments>3</experiments>
</comment>
<comment type="interaction">
    <interactant intactId="EBI-746252">
        <id>Q96CN9</id>
    </interactant>
    <interactant intactId="EBI-2805604">
        <id>Q2KHM9</id>
        <label>KIAA0753</label>
    </interactant>
    <organismsDiffer>false</organismsDiffer>
    <experiments>3</experiments>
</comment>
<comment type="interaction">
    <interactant intactId="EBI-746252">
        <id>Q96CN9</id>
    </interactant>
    <interactant intactId="EBI-355878">
        <id>P33176</id>
        <label>KIF5B</label>
    </interactant>
    <organismsDiffer>false</organismsDiffer>
    <experiments>3</experiments>
</comment>
<comment type="interaction">
    <interactant intactId="EBI-746252">
        <id>Q96CN9</id>
    </interactant>
    <interactant intactId="EBI-6658186">
        <id>Q86VQ0</id>
        <label>LCA5</label>
    </interactant>
    <organismsDiffer>false</organismsDiffer>
    <experiments>3</experiments>
</comment>
<comment type="interaction">
    <interactant intactId="EBI-746252">
        <id>Q96CN9</id>
    </interactant>
    <interactant intactId="EBI-741037">
        <id>Q9BRK4</id>
        <label>LZTS2</label>
    </interactant>
    <organismsDiffer>false</organismsDiffer>
    <experiments>3</experiments>
</comment>
<comment type="interaction">
    <interactant intactId="EBI-746252">
        <id>Q96CN9</id>
    </interactant>
    <interactant intactId="EBI-348259">
        <id>Q96EZ8</id>
        <label>MCRS1</label>
    </interactant>
    <organismsDiffer>false</organismsDiffer>
    <experiments>3</experiments>
</comment>
<comment type="interaction">
    <interactant intactId="EBI-746252">
        <id>Q96CN9</id>
    </interactant>
    <interactant intactId="EBI-394607">
        <id>Q9NPJ6</id>
        <label>MED4</label>
    </interactant>
    <organismsDiffer>false</organismsDiffer>
    <experiments>3</experiments>
</comment>
<comment type="interaction">
    <interactant intactId="EBI-746252">
        <id>Q96CN9</id>
    </interactant>
    <interactant intactId="EBI-2864512">
        <id>P50221</id>
        <label>MEOX1</label>
    </interactant>
    <organismsDiffer>false</organismsDiffer>
    <experiments>3</experiments>
</comment>
<comment type="interaction">
    <interactant intactId="EBI-746252">
        <id>Q96CN9</id>
    </interactant>
    <interactant intactId="EBI-10172526">
        <id>Q9UJV3-2</id>
        <label>MID2</label>
    </interactant>
    <organismsDiffer>false</organismsDiffer>
    <experiments>3</experiments>
</comment>
<comment type="interaction">
    <interactant intactId="EBI-746252">
        <id>Q96CN9</id>
    </interactant>
    <interactant intactId="EBI-8641936">
        <id>Q15742</id>
        <label>NAB2</label>
    </interactant>
    <organismsDiffer>false</organismsDiffer>
    <experiments>3</experiments>
</comment>
<comment type="interaction">
    <interactant intactId="EBI-746252">
        <id>Q96CN9</id>
    </interactant>
    <interactant intactId="EBI-11953718">
        <id>Q8NEY1-3</id>
        <label>NAV1</label>
    </interactant>
    <organismsDiffer>false</organismsDiffer>
    <experiments>3</experiments>
</comment>
<comment type="interaction">
    <interactant intactId="EBI-746252">
        <id>Q96CN9</id>
    </interactant>
    <interactant intactId="EBI-10270828">
        <id>Q8NEY1-4</id>
        <label>NAV1</label>
    </interactant>
    <organismsDiffer>false</organismsDiffer>
    <experiments>3</experiments>
</comment>
<comment type="interaction">
    <interactant intactId="EBI-746252">
        <id>Q96CN9</id>
    </interactant>
    <interactant intactId="EBI-10172876">
        <id>Q7Z6G3-2</id>
        <label>NECAB2</label>
    </interactant>
    <organismsDiffer>false</organismsDiffer>
    <experiments>3</experiments>
</comment>
<comment type="interaction">
    <interactant intactId="EBI-746252">
        <id>Q96CN9</id>
    </interactant>
    <interactant intactId="EBI-536879">
        <id>O43482</id>
        <label>OIP5</label>
    </interactant>
    <organismsDiffer>false</organismsDiffer>
    <experiments>3</experiments>
</comment>
<comment type="interaction">
    <interactant intactId="EBI-746252">
        <id>Q96CN9</id>
    </interactant>
    <interactant intactId="EBI-741896">
        <id>Q9P286</id>
        <label>PAK5</label>
    </interactant>
    <organismsDiffer>false</organismsDiffer>
    <experiments>3</experiments>
</comment>
<comment type="interaction">
    <interactant intactId="EBI-746252">
        <id>Q96CN9</id>
    </interactant>
    <interactant intactId="EBI-2557469">
        <id>Q6NYC8</id>
        <label>PPP1R18</label>
    </interactant>
    <organismsDiffer>false</organismsDiffer>
    <experiments>3</experiments>
</comment>
<comment type="interaction">
    <interactant intactId="EBI-746252">
        <id>Q96CN9</id>
    </interactant>
    <interactant intactId="EBI-5235602">
        <id>Q86WC6</id>
        <label>PPP1R27</label>
    </interactant>
    <organismsDiffer>false</organismsDiffer>
    <experiments>3</experiments>
</comment>
<comment type="interaction">
    <interactant intactId="EBI-746252">
        <id>Q96CN9</id>
    </interactant>
    <interactant intactId="EBI-2798416">
        <id>Q99633</id>
        <label>PRPF18</label>
    </interactant>
    <organismsDiffer>false</organismsDiffer>
    <experiments>3</experiments>
</comment>
<comment type="interaction">
    <interactant intactId="EBI-746252">
        <id>Q96CN9</id>
    </interactant>
    <interactant intactId="EBI-12001422">
        <id>Q01196-8</id>
        <label>RUNX1</label>
    </interactant>
    <organismsDiffer>false</organismsDiffer>
    <experiments>3</experiments>
</comment>
<comment type="interaction">
    <interactant intactId="EBI-746252">
        <id>Q96CN9</id>
    </interactant>
    <interactant intactId="EBI-1105213">
        <id>Q9UBB9</id>
        <label>TFIP11</label>
    </interactant>
    <organismsDiffer>false</organismsDiffer>
    <experiments>3</experiments>
</comment>
<comment type="interaction">
    <interactant intactId="EBI-746252">
        <id>Q96CN9</id>
    </interactant>
    <interactant intactId="EBI-11741437">
        <id>Q08117-2</id>
        <label>TLE5</label>
    </interactant>
    <organismsDiffer>false</organismsDiffer>
    <experiments>3</experiments>
</comment>
<comment type="interaction">
    <interactant intactId="EBI-746252">
        <id>Q96CN9</id>
    </interactant>
    <interactant intactId="EBI-11952721">
        <id>Q05BL1</id>
        <label>TP53BP2</label>
    </interactant>
    <organismsDiffer>false</organismsDiffer>
    <experiments>3</experiments>
</comment>
<comment type="interaction">
    <interactant intactId="EBI-746252">
        <id>Q96CN9</id>
    </interactant>
    <interactant intactId="EBI-702370">
        <id>Q14134</id>
        <label>TRIM29</label>
    </interactant>
    <organismsDiffer>false</organismsDiffer>
    <experiments>2</experiments>
</comment>
<comment type="interaction">
    <interactant intactId="EBI-746252">
        <id>Q96CN9</id>
    </interactant>
    <interactant intactId="EBI-9867283">
        <id>Q86XT4</id>
        <label>TRIM50</label>
    </interactant>
    <organismsDiffer>false</organismsDiffer>
    <experiments>3</experiments>
</comment>
<comment type="interaction">
    <interactant intactId="EBI-746252">
        <id>Q96CN9</id>
    </interactant>
    <interactant intactId="EBI-11737646">
        <id>Q5TAP6</id>
        <label>UTP14C</label>
    </interactant>
    <organismsDiffer>false</organismsDiffer>
    <experiments>3</experiments>
</comment>
<comment type="interaction">
    <interactant intactId="EBI-746252">
        <id>Q96CN9</id>
    </interactant>
    <interactant intactId="EBI-517127">
        <id>P98170</id>
        <label>XIAP</label>
    </interactant>
    <organismsDiffer>false</organismsDiffer>
    <experiments>3</experiments>
</comment>
<comment type="interaction">
    <interactant intactId="EBI-746252">
        <id>Q96CN9</id>
    </interactant>
    <interactant intactId="EBI-747993">
        <id>Q9NQZ6</id>
        <label>ZC4H2</label>
    </interactant>
    <organismsDiffer>false</organismsDiffer>
    <experiments>3</experiments>
</comment>
<comment type="interaction">
    <interactant intactId="EBI-746252">
        <id>Q96CN9</id>
    </interactant>
    <interactant intactId="EBI-11419867">
        <id>Q8TF47</id>
        <label>ZFP90</label>
    </interactant>
    <organismsDiffer>false</organismsDiffer>
    <experiments>3</experiments>
</comment>
<comment type="interaction">
    <interactant intactId="EBI-746252">
        <id>Q96CN9</id>
    </interactant>
    <interactant intactId="EBI-10265849">
        <id>Q8N554-2</id>
        <label>ZNF276</label>
    </interactant>
    <organismsDiffer>false</organismsDiffer>
    <experiments>3</experiments>
</comment>
<comment type="subcellular location">
    <subcellularLocation>
        <location evidence="5">Cytoplasm</location>
    </subcellularLocation>
    <subcellularLocation>
        <location evidence="1">Golgi apparatus membrane</location>
        <topology evidence="1">Peripheral membrane protein</topology>
    </subcellularLocation>
</comment>
<comment type="domain">
    <text>Extended rod-like protein with coiled-coil domains.</text>
</comment>
<comment type="sequence caution" evidence="6">
    <conflict type="erroneous translation">
        <sequence resource="EMBL-CDS" id="AAH08902"/>
    </conflict>
    <text>Wrong choice of frame.</text>
</comment>
<comment type="sequence caution" evidence="6">
    <conflict type="erroneous initiation">
        <sequence resource="EMBL-CDS" id="BAB15218"/>
    </conflict>
</comment>
<evidence type="ECO:0000250" key="1"/>
<evidence type="ECO:0000255" key="2"/>
<evidence type="ECO:0000255" key="3">
    <source>
        <dbReference type="PROSITE-ProRule" id="PRU00250"/>
    </source>
</evidence>
<evidence type="ECO:0000256" key="4">
    <source>
        <dbReference type="SAM" id="MobiDB-lite"/>
    </source>
</evidence>
<evidence type="ECO:0000269" key="5">
    <source>
    </source>
</evidence>
<evidence type="ECO:0000305" key="6"/>
<protein>
    <recommendedName>
        <fullName>GRIP and coiled-coil domain-containing protein 1</fullName>
    </recommendedName>
    <alternativeName>
        <fullName>Golgi coiled-coil protein 1</fullName>
    </alternativeName>
</protein>
<accession>Q96CN9</accession>
<accession>Q9H6N7</accession>
<dbReference type="EMBL" id="AF525417">
    <property type="protein sequence ID" value="AAM91948.1"/>
    <property type="molecule type" value="mRNA"/>
</dbReference>
<dbReference type="EMBL" id="BC008902">
    <property type="protein sequence ID" value="AAH08902.2"/>
    <property type="status" value="ALT_SEQ"/>
    <property type="molecule type" value="mRNA"/>
</dbReference>
<dbReference type="EMBL" id="BC014100">
    <property type="protein sequence ID" value="AAH14100.1"/>
    <property type="molecule type" value="mRNA"/>
</dbReference>
<dbReference type="EMBL" id="BC078665">
    <property type="protein sequence ID" value="AAH78665.1"/>
    <property type="molecule type" value="mRNA"/>
</dbReference>
<dbReference type="EMBL" id="AK025688">
    <property type="protein sequence ID" value="BAB15218.1"/>
    <property type="status" value="ALT_INIT"/>
    <property type="molecule type" value="mRNA"/>
</dbReference>
<dbReference type="CCDS" id="CCDS5796.1"/>
<dbReference type="RefSeq" id="NP_078799.2">
    <property type="nucleotide sequence ID" value="NM_024523.5"/>
</dbReference>
<dbReference type="SMR" id="Q96CN9"/>
<dbReference type="BioGRID" id="122718">
    <property type="interactions" value="114"/>
</dbReference>
<dbReference type="FunCoup" id="Q96CN9">
    <property type="interactions" value="1666"/>
</dbReference>
<dbReference type="IntAct" id="Q96CN9">
    <property type="interactions" value="93"/>
</dbReference>
<dbReference type="MINT" id="Q96CN9"/>
<dbReference type="STRING" id="9606.ENSP00000318821"/>
<dbReference type="iPTMnet" id="Q96CN9"/>
<dbReference type="MetOSite" id="Q96CN9"/>
<dbReference type="PhosphoSitePlus" id="Q96CN9"/>
<dbReference type="BioMuta" id="GCC1"/>
<dbReference type="DMDM" id="32699595"/>
<dbReference type="jPOST" id="Q96CN9"/>
<dbReference type="MassIVE" id="Q96CN9"/>
<dbReference type="PaxDb" id="9606-ENSP00000318821"/>
<dbReference type="PeptideAtlas" id="Q96CN9"/>
<dbReference type="ProteomicsDB" id="76200"/>
<dbReference type="Pumba" id="Q96CN9"/>
<dbReference type="Antibodypedia" id="17726">
    <property type="antibodies" value="158 antibodies from 22 providers"/>
</dbReference>
<dbReference type="DNASU" id="79571"/>
<dbReference type="Ensembl" id="ENST00000321407.3">
    <property type="protein sequence ID" value="ENSP00000318821.2"/>
    <property type="gene ID" value="ENSG00000179562.3"/>
</dbReference>
<dbReference type="GeneID" id="79571"/>
<dbReference type="KEGG" id="hsa:79571"/>
<dbReference type="MANE-Select" id="ENST00000321407.3">
    <property type="protein sequence ID" value="ENSP00000318821.2"/>
    <property type="RefSeq nucleotide sequence ID" value="NM_024523.6"/>
    <property type="RefSeq protein sequence ID" value="NP_078799.2"/>
</dbReference>
<dbReference type="UCSC" id="uc003vma.4">
    <property type="organism name" value="human"/>
</dbReference>
<dbReference type="AGR" id="HGNC:19095"/>
<dbReference type="CTD" id="79571"/>
<dbReference type="DisGeNET" id="79571"/>
<dbReference type="GeneCards" id="GCC1"/>
<dbReference type="HGNC" id="HGNC:19095">
    <property type="gene designation" value="GCC1"/>
</dbReference>
<dbReference type="HPA" id="ENSG00000179562">
    <property type="expression patterns" value="Low tissue specificity"/>
</dbReference>
<dbReference type="MIM" id="607418">
    <property type="type" value="gene"/>
</dbReference>
<dbReference type="neXtProt" id="NX_Q96CN9"/>
<dbReference type="OpenTargets" id="ENSG00000179562"/>
<dbReference type="PharmGKB" id="PA38796"/>
<dbReference type="VEuPathDB" id="HostDB:ENSG00000179562"/>
<dbReference type="eggNOG" id="ENOG502QQ2S">
    <property type="taxonomic scope" value="Eukaryota"/>
</dbReference>
<dbReference type="GeneTree" id="ENSGT00940000153772"/>
<dbReference type="HOGENOM" id="CLU_020679_0_0_1"/>
<dbReference type="InParanoid" id="Q96CN9"/>
<dbReference type="OMA" id="AEMQAIN"/>
<dbReference type="OrthoDB" id="9898580at2759"/>
<dbReference type="PAN-GO" id="Q96CN9">
    <property type="GO annotations" value="1 GO annotation based on evolutionary models"/>
</dbReference>
<dbReference type="PhylomeDB" id="Q96CN9"/>
<dbReference type="TreeFam" id="TF324186"/>
<dbReference type="PathwayCommons" id="Q96CN9"/>
<dbReference type="Reactome" id="R-HSA-6811440">
    <property type="pathway name" value="Retrograde transport at the Trans-Golgi-Network"/>
</dbReference>
<dbReference type="SignaLink" id="Q96CN9"/>
<dbReference type="SIGNOR" id="Q96CN9"/>
<dbReference type="BioGRID-ORCS" id="79571">
    <property type="hits" value="16 hits in 1161 CRISPR screens"/>
</dbReference>
<dbReference type="CD-CODE" id="F3208D05">
    <property type="entry name" value="Golgin condensate"/>
</dbReference>
<dbReference type="ChiTaRS" id="GCC1">
    <property type="organism name" value="human"/>
</dbReference>
<dbReference type="GeneWiki" id="GCC1"/>
<dbReference type="GenomeRNAi" id="79571"/>
<dbReference type="Pharos" id="Q96CN9">
    <property type="development level" value="Tbio"/>
</dbReference>
<dbReference type="PRO" id="PR:Q96CN9"/>
<dbReference type="Proteomes" id="UP000005640">
    <property type="component" value="Chromosome 7"/>
</dbReference>
<dbReference type="RNAct" id="Q96CN9">
    <property type="molecule type" value="protein"/>
</dbReference>
<dbReference type="Bgee" id="ENSG00000179562">
    <property type="expression patterns" value="Expressed in secondary oocyte and 194 other cell types or tissues"/>
</dbReference>
<dbReference type="ExpressionAtlas" id="Q96CN9">
    <property type="expression patterns" value="baseline and differential"/>
</dbReference>
<dbReference type="GO" id="GO:0005829">
    <property type="term" value="C:cytosol"/>
    <property type="evidence" value="ECO:0000304"/>
    <property type="project" value="Reactome"/>
</dbReference>
<dbReference type="GO" id="GO:0005794">
    <property type="term" value="C:Golgi apparatus"/>
    <property type="evidence" value="ECO:0000318"/>
    <property type="project" value="GO_Central"/>
</dbReference>
<dbReference type="GO" id="GO:0000139">
    <property type="term" value="C:Golgi membrane"/>
    <property type="evidence" value="ECO:0007669"/>
    <property type="project" value="UniProtKB-SubCell"/>
</dbReference>
<dbReference type="GO" id="GO:0000138">
    <property type="term" value="C:Golgi trans cisterna"/>
    <property type="evidence" value="ECO:0000250"/>
    <property type="project" value="FlyBase"/>
</dbReference>
<dbReference type="GO" id="GO:0031267">
    <property type="term" value="F:small GTPase binding"/>
    <property type="evidence" value="ECO:0000250"/>
    <property type="project" value="FlyBase"/>
</dbReference>
<dbReference type="FunFam" id="1.10.220.60:FF:000005">
    <property type="entry name" value="GRIP and coiled-coil domain-containing protein 1"/>
    <property type="match status" value="1"/>
</dbReference>
<dbReference type="Gene3D" id="1.10.220.60">
    <property type="entry name" value="GRIP domain"/>
    <property type="match status" value="1"/>
</dbReference>
<dbReference type="InterPro" id="IPR051952">
    <property type="entry name" value="Golgi-autophagy_related"/>
</dbReference>
<dbReference type="InterPro" id="IPR000237">
    <property type="entry name" value="GRIP_dom"/>
</dbReference>
<dbReference type="PANTHER" id="PTHR23157">
    <property type="entry name" value="GRIP AND COILED-COIL DOMAIN-CONTAINING PROTEIN 1"/>
    <property type="match status" value="1"/>
</dbReference>
<dbReference type="PANTHER" id="PTHR23157:SF25">
    <property type="entry name" value="GRIP AND COILED-COIL DOMAIN-CONTAINING PROTEIN 1"/>
    <property type="match status" value="1"/>
</dbReference>
<dbReference type="Pfam" id="PF01465">
    <property type="entry name" value="GRIP"/>
    <property type="match status" value="1"/>
</dbReference>
<dbReference type="SMART" id="SM00755">
    <property type="entry name" value="Grip"/>
    <property type="match status" value="1"/>
</dbReference>
<dbReference type="PROSITE" id="PS50913">
    <property type="entry name" value="GRIP"/>
    <property type="match status" value="1"/>
</dbReference>
<feature type="chain" id="PRO_0000190072" description="GRIP and coiled-coil domain-containing protein 1">
    <location>
        <begin position="1"/>
        <end position="775"/>
    </location>
</feature>
<feature type="domain" description="GRIP" evidence="3">
    <location>
        <begin position="713"/>
        <end position="763"/>
    </location>
</feature>
<feature type="region of interest" description="Disordered" evidence="4">
    <location>
        <begin position="84"/>
        <end position="153"/>
    </location>
</feature>
<feature type="region of interest" description="Disordered" evidence="4">
    <location>
        <begin position="614"/>
        <end position="639"/>
    </location>
</feature>
<feature type="coiled-coil region" evidence="2">
    <location>
        <begin position="13"/>
        <end position="61"/>
    </location>
</feature>
<feature type="coiled-coil region" evidence="2">
    <location>
        <begin position="153"/>
        <end position="763"/>
    </location>
</feature>
<feature type="compositionally biased region" description="Basic and acidic residues" evidence="4">
    <location>
        <begin position="84"/>
        <end position="93"/>
    </location>
</feature>
<feature type="compositionally biased region" description="Low complexity" evidence="4">
    <location>
        <begin position="94"/>
        <end position="110"/>
    </location>
</feature>
<feature type="compositionally biased region" description="Low complexity" evidence="4">
    <location>
        <begin position="133"/>
        <end position="147"/>
    </location>
</feature>
<feature type="compositionally biased region" description="Low complexity" evidence="4">
    <location>
        <begin position="629"/>
        <end position="638"/>
    </location>
</feature>
<feature type="sequence variant" id="VAR_021902" description="In dbSNP:rs17151044.">
    <original>R</original>
    <variation>W</variation>
    <location>
        <position position="86"/>
    </location>
</feature>
<feature type="sequence variant" id="VAR_020157" description="In dbSNP:rs2285348.">
    <original>C</original>
    <variation>W</variation>
    <location>
        <position position="87"/>
    </location>
</feature>
<feature type="sequence variant" id="VAR_049259" description="In dbSNP:rs35322201.">
    <original>A</original>
    <variation>V</variation>
    <location>
        <position position="122"/>
    </location>
</feature>
<feature type="sequence variant" id="VAR_049260" description="In dbSNP:rs35390108.">
    <original>Q</original>
    <variation>R</variation>
    <location>
        <position position="262"/>
    </location>
</feature>
<feature type="sequence variant" id="VAR_049261" description="In dbSNP:rs34887879.">
    <original>A</original>
    <variation>T</variation>
    <location>
        <position position="274"/>
    </location>
</feature>
<feature type="sequence variant" id="VAR_049262" description="In dbSNP:rs34883586.">
    <original>R</original>
    <variation>C</variation>
    <location>
        <position position="618"/>
    </location>
</feature>
<proteinExistence type="evidence at protein level"/>
<organism>
    <name type="scientific">Homo sapiens</name>
    <name type="common">Human</name>
    <dbReference type="NCBI Taxonomy" id="9606"/>
    <lineage>
        <taxon>Eukaryota</taxon>
        <taxon>Metazoa</taxon>
        <taxon>Chordata</taxon>
        <taxon>Craniata</taxon>
        <taxon>Vertebrata</taxon>
        <taxon>Euteleostomi</taxon>
        <taxon>Mammalia</taxon>
        <taxon>Eutheria</taxon>
        <taxon>Euarchontoglires</taxon>
        <taxon>Primates</taxon>
        <taxon>Haplorrhini</taxon>
        <taxon>Catarrhini</taxon>
        <taxon>Hominidae</taxon>
        <taxon>Homo</taxon>
    </lineage>
</organism>
<sequence length="775" mass="87811">MEKFGMNFGGGPSKKDLLETIETQKKQLLQYQARLKDVVRAYKSLLKEKEALEASIKVLSVSHEADVGLAGVQLPGLTFPDSVDDRCSTHSEDSTGTATSLDTAASLTSTKGEFGVEDDRPARGPPPPKSEEASWSESGVSSSSGDGPFAGGEVDKRLHQLKTQLATLTSSLATVTQEKSRMEASYLADKKKMKQDLEDASNKAEEERARLEGELKGLQEQIAETKARLITQQHDRAQEQSDHALMLRELQKLLQEERTQRQDLELRLEETREALAGRAYAAEQMEGFELQTKQLTREVEELKSELQAIRDEKNQPDPRLQELQEEAARLKSHFQAQLQQEMRKTALAEDQLRQQSQVEEQRVAALENQISEVSELLGTYEKAKQKDQLAIQKLKERILQLDLENKTLALAASSRSPLDSHGEESSLDVNVLKDKMEKLKRLLQVAARKSQVTLDVEKLCDLEIMPSSEAADGEKATALYYQQELKQLKEEFERYKMRAQVVLKSKNTKDGNLGKELEAAQEQLAELKEKYISLRLSCEELEHQHQQEADDWKQELARLQQLHRQELERCQLDFRDRTLKLEEELHKQRDRALAVLTEKDLELEQLRSVALASGLPGRRSPVGGGGPGDPADTSSSDSLTQALQLAAANEPTFFLYAEQLARKEVEITSLRKQKHRLEVEVHQLQDRLLEEGERHREEVAALQSHIEKNIRDQSREGANLEYLKNIIYRFLTLPDSLGRQQTLTAILTILHFSPEEKQVIMRLPTSASWWPSGKR</sequence>
<name>GCC1_HUMAN</name>
<keyword id="KW-0175">Coiled coil</keyword>
<keyword id="KW-0963">Cytoplasm</keyword>
<keyword id="KW-0333">Golgi apparatus</keyword>
<keyword id="KW-0472">Membrane</keyword>
<keyword id="KW-1267">Proteomics identification</keyword>
<keyword id="KW-1185">Reference proteome</keyword>
<reference key="1">
    <citation type="journal article" date="2003" name="J. Biol. Chem.">
        <title>GRIP domain-mediated targeting of two new coiled-coil proteins, GCC88 and GCC185, to subcompartments of the trans-Golgi network.</title>
        <authorList>
            <person name="Luke M.R."/>
            <person name="Kjer-Nielsen L."/>
            <person name="Brown D.L."/>
            <person name="Stow J.L."/>
            <person name="Gleeson P.A."/>
        </authorList>
    </citation>
    <scope>NUCLEOTIDE SEQUENCE [MRNA]</scope>
    <source>
        <tissue>Cervix carcinoma</tissue>
    </source>
</reference>
<reference key="2">
    <citation type="journal article" date="2004" name="Genome Res.">
        <title>The status, quality, and expansion of the NIH full-length cDNA project: the Mammalian Gene Collection (MGC).</title>
        <authorList>
            <consortium name="The MGC Project Team"/>
        </authorList>
    </citation>
    <scope>NUCLEOTIDE SEQUENCE [LARGE SCALE MRNA]</scope>
    <source>
        <tissue>Brain</tissue>
        <tissue>Skin</tissue>
        <tissue>Uterus</tissue>
    </source>
</reference>
<reference key="3">
    <citation type="journal article" date="2004" name="Nat. Genet.">
        <title>Complete sequencing and characterization of 21,243 full-length human cDNAs.</title>
        <authorList>
            <person name="Ota T."/>
            <person name="Suzuki Y."/>
            <person name="Nishikawa T."/>
            <person name="Otsuki T."/>
            <person name="Sugiyama T."/>
            <person name="Irie R."/>
            <person name="Wakamatsu A."/>
            <person name="Hayashi K."/>
            <person name="Sato H."/>
            <person name="Nagai K."/>
            <person name="Kimura K."/>
            <person name="Makita H."/>
            <person name="Sekine M."/>
            <person name="Obayashi M."/>
            <person name="Nishi T."/>
            <person name="Shibahara T."/>
            <person name="Tanaka T."/>
            <person name="Ishii S."/>
            <person name="Yamamoto J."/>
            <person name="Saito K."/>
            <person name="Kawai Y."/>
            <person name="Isono Y."/>
            <person name="Nakamura Y."/>
            <person name="Nagahari K."/>
            <person name="Murakami K."/>
            <person name="Yasuda T."/>
            <person name="Iwayanagi T."/>
            <person name="Wagatsuma M."/>
            <person name="Shiratori A."/>
            <person name="Sudo H."/>
            <person name="Hosoiri T."/>
            <person name="Kaku Y."/>
            <person name="Kodaira H."/>
            <person name="Kondo H."/>
            <person name="Sugawara M."/>
            <person name="Takahashi M."/>
            <person name="Kanda K."/>
            <person name="Yokoi T."/>
            <person name="Furuya T."/>
            <person name="Kikkawa E."/>
            <person name="Omura Y."/>
            <person name="Abe K."/>
            <person name="Kamihara K."/>
            <person name="Katsuta N."/>
            <person name="Sato K."/>
            <person name="Tanikawa M."/>
            <person name="Yamazaki M."/>
            <person name="Ninomiya K."/>
            <person name="Ishibashi T."/>
            <person name="Yamashita H."/>
            <person name="Murakawa K."/>
            <person name="Fujimori K."/>
            <person name="Tanai H."/>
            <person name="Kimata M."/>
            <person name="Watanabe M."/>
            <person name="Hiraoka S."/>
            <person name="Chiba Y."/>
            <person name="Ishida S."/>
            <person name="Ono Y."/>
            <person name="Takiguchi S."/>
            <person name="Watanabe S."/>
            <person name="Yosida M."/>
            <person name="Hotuta T."/>
            <person name="Kusano J."/>
            <person name="Kanehori K."/>
            <person name="Takahashi-Fujii A."/>
            <person name="Hara H."/>
            <person name="Tanase T.-O."/>
            <person name="Nomura Y."/>
            <person name="Togiya S."/>
            <person name="Komai F."/>
            <person name="Hara R."/>
            <person name="Takeuchi K."/>
            <person name="Arita M."/>
            <person name="Imose N."/>
            <person name="Musashino K."/>
            <person name="Yuuki H."/>
            <person name="Oshima A."/>
            <person name="Sasaki N."/>
            <person name="Aotsuka S."/>
            <person name="Yoshikawa Y."/>
            <person name="Matsunawa H."/>
            <person name="Ichihara T."/>
            <person name="Shiohata N."/>
            <person name="Sano S."/>
            <person name="Moriya S."/>
            <person name="Momiyama H."/>
            <person name="Satoh N."/>
            <person name="Takami S."/>
            <person name="Terashima Y."/>
            <person name="Suzuki O."/>
            <person name="Nakagawa S."/>
            <person name="Senoh A."/>
            <person name="Mizoguchi H."/>
            <person name="Goto Y."/>
            <person name="Shimizu F."/>
            <person name="Wakebe H."/>
            <person name="Hishigaki H."/>
            <person name="Watanabe T."/>
            <person name="Sugiyama A."/>
            <person name="Takemoto M."/>
            <person name="Kawakami B."/>
            <person name="Yamazaki M."/>
            <person name="Watanabe K."/>
            <person name="Kumagai A."/>
            <person name="Itakura S."/>
            <person name="Fukuzumi Y."/>
            <person name="Fujimori Y."/>
            <person name="Komiyama M."/>
            <person name="Tashiro H."/>
            <person name="Tanigami A."/>
            <person name="Fujiwara T."/>
            <person name="Ono T."/>
            <person name="Yamada K."/>
            <person name="Fujii Y."/>
            <person name="Ozaki K."/>
            <person name="Hirao M."/>
            <person name="Ohmori Y."/>
            <person name="Kawabata A."/>
            <person name="Hikiji T."/>
            <person name="Kobatake N."/>
            <person name="Inagaki H."/>
            <person name="Ikema Y."/>
            <person name="Okamoto S."/>
            <person name="Okitani R."/>
            <person name="Kawakami T."/>
            <person name="Noguchi S."/>
            <person name="Itoh T."/>
            <person name="Shigeta K."/>
            <person name="Senba T."/>
            <person name="Matsumura K."/>
            <person name="Nakajima Y."/>
            <person name="Mizuno T."/>
            <person name="Morinaga M."/>
            <person name="Sasaki M."/>
            <person name="Togashi T."/>
            <person name="Oyama M."/>
            <person name="Hata H."/>
            <person name="Watanabe M."/>
            <person name="Komatsu T."/>
            <person name="Mizushima-Sugano J."/>
            <person name="Satoh T."/>
            <person name="Shirai Y."/>
            <person name="Takahashi Y."/>
            <person name="Nakagawa K."/>
            <person name="Okumura K."/>
            <person name="Nagase T."/>
            <person name="Nomura N."/>
            <person name="Kikuchi H."/>
            <person name="Masuho Y."/>
            <person name="Yamashita R."/>
            <person name="Nakai K."/>
            <person name="Yada T."/>
            <person name="Nakamura Y."/>
            <person name="Ohara O."/>
            <person name="Isogai T."/>
            <person name="Sugano S."/>
        </authorList>
    </citation>
    <scope>NUCLEOTIDE SEQUENCE [LARGE SCALE MRNA] OF 309-775</scope>
    <source>
        <tissue>Hepatoma</tissue>
    </source>
</reference>
<reference key="4">
    <citation type="journal article" date="1999" name="Curr. Biol.">
        <title>A novel Golgi-localisation domain shared by a class of coiled-coil peripheral membrane proteins.</title>
        <authorList>
            <person name="Kjer-Nielsen L."/>
            <person name="Teasdale R.D."/>
            <person name="van Vliet C."/>
            <person name="Gleeson P.A."/>
        </authorList>
    </citation>
    <scope>SUBCELLULAR LOCATION</scope>
</reference>
<gene>
    <name type="primary">GCC1</name>
</gene>